<gene>
    <name evidence="1" type="primary">ihfB</name>
    <name evidence="1" type="synonym">himD</name>
    <name type="ordered locus">Oant_0165</name>
</gene>
<keyword id="KW-0233">DNA recombination</keyword>
<keyword id="KW-0238">DNA-binding</keyword>
<keyword id="KW-1185">Reference proteome</keyword>
<keyword id="KW-0804">Transcription</keyword>
<keyword id="KW-0805">Transcription regulation</keyword>
<keyword id="KW-0810">Translation regulation</keyword>
<name>IHFB_BRUA4</name>
<accession>A6WV92</accession>
<organism>
    <name type="scientific">Brucella anthropi (strain ATCC 49188 / DSM 6882 / CCUG 24695 / JCM 21032 / LMG 3331 / NBRC 15819 / NCTC 12168 / Alc 37)</name>
    <name type="common">Ochrobactrum anthropi</name>
    <dbReference type="NCBI Taxonomy" id="439375"/>
    <lineage>
        <taxon>Bacteria</taxon>
        <taxon>Pseudomonadati</taxon>
        <taxon>Pseudomonadota</taxon>
        <taxon>Alphaproteobacteria</taxon>
        <taxon>Hyphomicrobiales</taxon>
        <taxon>Brucellaceae</taxon>
        <taxon>Brucella/Ochrobactrum group</taxon>
        <taxon>Brucella</taxon>
    </lineage>
</organism>
<protein>
    <recommendedName>
        <fullName evidence="1">Integration host factor subunit beta</fullName>
        <shortName evidence="1">IHF-beta</shortName>
    </recommendedName>
</protein>
<dbReference type="EMBL" id="CP000758">
    <property type="protein sequence ID" value="ABS12896.1"/>
    <property type="molecule type" value="Genomic_DNA"/>
</dbReference>
<dbReference type="RefSeq" id="WP_004687882.1">
    <property type="nucleotide sequence ID" value="NC_009667.1"/>
</dbReference>
<dbReference type="SMR" id="A6WV92"/>
<dbReference type="STRING" id="439375.Oant_0165"/>
<dbReference type="KEGG" id="oan:Oant_0165"/>
<dbReference type="eggNOG" id="COG0776">
    <property type="taxonomic scope" value="Bacteria"/>
</dbReference>
<dbReference type="HOGENOM" id="CLU_105066_2_0_5"/>
<dbReference type="Proteomes" id="UP000002301">
    <property type="component" value="Chromosome 1"/>
</dbReference>
<dbReference type="GO" id="GO:0005694">
    <property type="term" value="C:chromosome"/>
    <property type="evidence" value="ECO:0007669"/>
    <property type="project" value="InterPro"/>
</dbReference>
<dbReference type="GO" id="GO:0005829">
    <property type="term" value="C:cytosol"/>
    <property type="evidence" value="ECO:0007669"/>
    <property type="project" value="TreeGrafter"/>
</dbReference>
<dbReference type="GO" id="GO:0003677">
    <property type="term" value="F:DNA binding"/>
    <property type="evidence" value="ECO:0007669"/>
    <property type="project" value="UniProtKB-UniRule"/>
</dbReference>
<dbReference type="GO" id="GO:0030527">
    <property type="term" value="F:structural constituent of chromatin"/>
    <property type="evidence" value="ECO:0007669"/>
    <property type="project" value="InterPro"/>
</dbReference>
<dbReference type="GO" id="GO:0006310">
    <property type="term" value="P:DNA recombination"/>
    <property type="evidence" value="ECO:0007669"/>
    <property type="project" value="UniProtKB-UniRule"/>
</dbReference>
<dbReference type="GO" id="GO:0006355">
    <property type="term" value="P:regulation of DNA-templated transcription"/>
    <property type="evidence" value="ECO:0007669"/>
    <property type="project" value="UniProtKB-UniRule"/>
</dbReference>
<dbReference type="GO" id="GO:0006417">
    <property type="term" value="P:regulation of translation"/>
    <property type="evidence" value="ECO:0007669"/>
    <property type="project" value="UniProtKB-UniRule"/>
</dbReference>
<dbReference type="CDD" id="cd13836">
    <property type="entry name" value="IHF_B"/>
    <property type="match status" value="1"/>
</dbReference>
<dbReference type="Gene3D" id="4.10.520.10">
    <property type="entry name" value="IHF-like DNA-binding proteins"/>
    <property type="match status" value="1"/>
</dbReference>
<dbReference type="HAMAP" id="MF_00381">
    <property type="entry name" value="IHF_beta"/>
    <property type="match status" value="1"/>
</dbReference>
<dbReference type="InterPro" id="IPR000119">
    <property type="entry name" value="Hist_DNA-bd"/>
</dbReference>
<dbReference type="InterPro" id="IPR020816">
    <property type="entry name" value="Histone-like_DNA-bd_CS"/>
</dbReference>
<dbReference type="InterPro" id="IPR010992">
    <property type="entry name" value="IHF-like_DNA-bd_dom_sf"/>
</dbReference>
<dbReference type="InterPro" id="IPR005685">
    <property type="entry name" value="IHF_beta"/>
</dbReference>
<dbReference type="NCBIfam" id="TIGR00988">
    <property type="entry name" value="hip"/>
    <property type="match status" value="1"/>
</dbReference>
<dbReference type="NCBIfam" id="NF001222">
    <property type="entry name" value="PRK00199.1"/>
    <property type="match status" value="1"/>
</dbReference>
<dbReference type="PANTHER" id="PTHR33175">
    <property type="entry name" value="DNA-BINDING PROTEIN HU"/>
    <property type="match status" value="1"/>
</dbReference>
<dbReference type="PANTHER" id="PTHR33175:SF5">
    <property type="entry name" value="INTEGRATION HOST FACTOR SUBUNIT BETA"/>
    <property type="match status" value="1"/>
</dbReference>
<dbReference type="Pfam" id="PF00216">
    <property type="entry name" value="Bac_DNA_binding"/>
    <property type="match status" value="1"/>
</dbReference>
<dbReference type="PRINTS" id="PR01727">
    <property type="entry name" value="DNABINDINGHU"/>
</dbReference>
<dbReference type="SMART" id="SM00411">
    <property type="entry name" value="BHL"/>
    <property type="match status" value="1"/>
</dbReference>
<dbReference type="SUPFAM" id="SSF47729">
    <property type="entry name" value="IHF-like DNA-binding proteins"/>
    <property type="match status" value="1"/>
</dbReference>
<dbReference type="PROSITE" id="PS00045">
    <property type="entry name" value="HISTONE_LIKE"/>
    <property type="match status" value="1"/>
</dbReference>
<comment type="function">
    <text evidence="1">This protein is one of the two subunits of integration host factor, a specific DNA-binding protein that functions in genetic recombination as well as in transcriptional and translational control.</text>
</comment>
<comment type="subunit">
    <text evidence="1">Heterodimer of an alpha and a beta chain.</text>
</comment>
<comment type="similarity">
    <text evidence="1">Belongs to the bacterial histone-like protein family.</text>
</comment>
<reference key="1">
    <citation type="journal article" date="2011" name="J. Bacteriol.">
        <title>Genome of Ochrobactrum anthropi ATCC 49188 T, a versatile opportunistic pathogen and symbiont of several eukaryotic hosts.</title>
        <authorList>
            <person name="Chain P.S."/>
            <person name="Lang D.M."/>
            <person name="Comerci D.J."/>
            <person name="Malfatti S.A."/>
            <person name="Vergez L.M."/>
            <person name="Shin M."/>
            <person name="Ugalde R.A."/>
            <person name="Garcia E."/>
            <person name="Tolmasky M.E."/>
        </authorList>
    </citation>
    <scope>NUCLEOTIDE SEQUENCE [LARGE SCALE GENOMIC DNA]</scope>
    <source>
        <strain>ATCC 49188 / DSM 6882 / CCUG 24695 / JCM 21032 / LMG 3331 / NBRC 15819 / NCTC 12168 / Alc 37</strain>
    </source>
</reference>
<proteinExistence type="inferred from homology"/>
<sequence length="94" mass="10567">MIKSELVQIIASRNPHLFQRDVENIVGAVFDEITNALAEGNRVELRGFGAFSVKNRPARSGRNPRTGETVDVEEKWVPFFKTGKELRDRLNGAV</sequence>
<feature type="chain" id="PRO_1000060624" description="Integration host factor subunit beta">
    <location>
        <begin position="1"/>
        <end position="94"/>
    </location>
</feature>
<evidence type="ECO:0000255" key="1">
    <source>
        <dbReference type="HAMAP-Rule" id="MF_00381"/>
    </source>
</evidence>